<comment type="subcellular location">
    <subcellularLocation>
        <location evidence="1">Virion membrane</location>
        <topology evidence="1">Single-pass membrane protein</topology>
    </subcellularLocation>
</comment>
<comment type="similarity">
    <text evidence="3">Belongs to the HHV-5 UL41A protein family.</text>
</comment>
<feature type="chain" id="PRO_0000418286" description="Protein UL41A">
    <location>
        <begin position="1"/>
        <end position="78"/>
    </location>
</feature>
<feature type="transmembrane region" description="Helical" evidence="2">
    <location>
        <begin position="19"/>
        <end position="39"/>
    </location>
</feature>
<feature type="glycosylation site" description="N-linked (GlcNAc...) asparagine; by host" evidence="2">
    <location>
        <position position="9"/>
    </location>
</feature>
<name>UL41A_HCMVM</name>
<keyword id="KW-0325">Glycoprotein</keyword>
<keyword id="KW-0472">Membrane</keyword>
<keyword id="KW-1185">Reference proteome</keyword>
<keyword id="KW-0812">Transmembrane</keyword>
<keyword id="KW-1133">Transmembrane helix</keyword>
<keyword id="KW-0946">Virion</keyword>
<organismHost>
    <name type="scientific">Homo sapiens</name>
    <name type="common">Human</name>
    <dbReference type="NCBI Taxonomy" id="9606"/>
</organismHost>
<accession>F5HFG3</accession>
<proteinExistence type="inferred from homology"/>
<protein>
    <recommendedName>
        <fullName>Protein UL41A</fullName>
    </recommendedName>
</protein>
<evidence type="ECO:0000250" key="1"/>
<evidence type="ECO:0000255" key="2"/>
<evidence type="ECO:0000305" key="3"/>
<dbReference type="EMBL" id="AY446894">
    <property type="protein sequence ID" value="AAR31605.1"/>
    <property type="molecule type" value="Genomic_DNA"/>
</dbReference>
<dbReference type="RefSeq" id="YP_081499.1">
    <property type="nucleotide sequence ID" value="NC_006273.2"/>
</dbReference>
<dbReference type="SMR" id="F5HFG3"/>
<dbReference type="GlyCosmos" id="F5HFG3">
    <property type="glycosylation" value="1 site, No reported glycans"/>
</dbReference>
<dbReference type="DNASU" id="3077475"/>
<dbReference type="GeneID" id="3077475"/>
<dbReference type="KEGG" id="vg:3077475"/>
<dbReference type="Reactome" id="R-HSA-9610379">
    <property type="pathway name" value="HCMV Late Events"/>
</dbReference>
<dbReference type="Proteomes" id="UP000000938">
    <property type="component" value="Segment"/>
</dbReference>
<dbReference type="GO" id="GO:0016020">
    <property type="term" value="C:membrane"/>
    <property type="evidence" value="ECO:0007669"/>
    <property type="project" value="UniProtKB-KW"/>
</dbReference>
<dbReference type="GO" id="GO:0055036">
    <property type="term" value="C:virion membrane"/>
    <property type="evidence" value="ECO:0007669"/>
    <property type="project" value="UniProtKB-SubCell"/>
</dbReference>
<dbReference type="InterPro" id="IPR020141">
    <property type="entry name" value="Herpesvirus_UL41A"/>
</dbReference>
<dbReference type="Pfam" id="PF17591">
    <property type="entry name" value="UL41A"/>
    <property type="match status" value="1"/>
</dbReference>
<gene>
    <name type="primary">UL41A</name>
</gene>
<organism>
    <name type="scientific">Human cytomegalovirus (strain Merlin)</name>
    <name type="common">HHV-5</name>
    <name type="synonym">Human herpesvirus 5</name>
    <dbReference type="NCBI Taxonomy" id="295027"/>
    <lineage>
        <taxon>Viruses</taxon>
        <taxon>Duplodnaviria</taxon>
        <taxon>Heunggongvirae</taxon>
        <taxon>Peploviricota</taxon>
        <taxon>Herviviricetes</taxon>
        <taxon>Herpesvirales</taxon>
        <taxon>Orthoherpesviridae</taxon>
        <taxon>Betaherpesvirinae</taxon>
        <taxon>Cytomegalovirus</taxon>
        <taxon>Cytomegalovirus humanbeta5</taxon>
        <taxon>Human cytomegalovirus</taxon>
    </lineage>
</organism>
<reference key="1">
    <citation type="journal article" date="2004" name="J. Gen. Virol.">
        <title>Genetic content of wild-type human cytomegalovirus.</title>
        <authorList>
            <person name="Dolan A."/>
            <person name="Cunningham C."/>
            <person name="Hector R.D."/>
            <person name="Hassan-Walker A.F."/>
            <person name="Lee L."/>
            <person name="Addison C."/>
            <person name="Dargan D.J."/>
            <person name="McGeoch D.J."/>
            <person name="Gatherer D."/>
            <person name="Emery V.C."/>
            <person name="Griffiths P.D."/>
            <person name="Sinzger C."/>
            <person name="McSharry B.P."/>
            <person name="Wilkinson G.W.G."/>
            <person name="Davison A.J."/>
        </authorList>
    </citation>
    <scope>NUCLEOTIDE SEQUENCE [LARGE SCALE GENOMIC DNA]</scope>
</reference>
<sequence length="78" mass="8953">MTLFCRTANSTAGYVDMNVCIGMIGVVCFVFGVFILIFCSTLKAFYVRQKTYHLLGTESDDEETTVWEKRRMESDTDF</sequence>